<accession>A6MMZ5</accession>
<evidence type="ECO:0000255" key="1">
    <source>
        <dbReference type="HAMAP-Rule" id="MF_00491"/>
    </source>
</evidence>
<gene>
    <name evidence="1" type="primary">ndhD</name>
</gene>
<dbReference type="EC" id="7.1.1.-" evidence="1"/>
<dbReference type="EMBL" id="EF380354">
    <property type="protein sequence ID" value="ABQ52570.1"/>
    <property type="molecule type" value="Genomic_DNA"/>
</dbReference>
<dbReference type="RefSeq" id="YP_001294321.1">
    <property type="nucleotide sequence ID" value="NC_009600.1"/>
</dbReference>
<dbReference type="SMR" id="A6MMZ5"/>
<dbReference type="GeneID" id="5236715"/>
<dbReference type="GO" id="GO:0009535">
    <property type="term" value="C:chloroplast thylakoid membrane"/>
    <property type="evidence" value="ECO:0007669"/>
    <property type="project" value="UniProtKB-SubCell"/>
</dbReference>
<dbReference type="GO" id="GO:0008137">
    <property type="term" value="F:NADH dehydrogenase (ubiquinone) activity"/>
    <property type="evidence" value="ECO:0007669"/>
    <property type="project" value="InterPro"/>
</dbReference>
<dbReference type="GO" id="GO:0048039">
    <property type="term" value="F:ubiquinone binding"/>
    <property type="evidence" value="ECO:0007669"/>
    <property type="project" value="TreeGrafter"/>
</dbReference>
<dbReference type="GO" id="GO:0042773">
    <property type="term" value="P:ATP synthesis coupled electron transport"/>
    <property type="evidence" value="ECO:0007669"/>
    <property type="project" value="InterPro"/>
</dbReference>
<dbReference type="GO" id="GO:0015990">
    <property type="term" value="P:electron transport coupled proton transport"/>
    <property type="evidence" value="ECO:0007669"/>
    <property type="project" value="TreeGrafter"/>
</dbReference>
<dbReference type="HAMAP" id="MF_00491">
    <property type="entry name" value="NDH1_NuoM"/>
    <property type="match status" value="1"/>
</dbReference>
<dbReference type="InterPro" id="IPR022997">
    <property type="entry name" value="NADH_Q_OxRdtase_chain4"/>
</dbReference>
<dbReference type="InterPro" id="IPR010227">
    <property type="entry name" value="NADH_Q_OxRdtase_chainM/4"/>
</dbReference>
<dbReference type="InterPro" id="IPR003918">
    <property type="entry name" value="NADH_UbQ_OxRdtase"/>
</dbReference>
<dbReference type="InterPro" id="IPR001750">
    <property type="entry name" value="ND/Mrp_TM"/>
</dbReference>
<dbReference type="NCBIfam" id="TIGR01972">
    <property type="entry name" value="NDH_I_M"/>
    <property type="match status" value="1"/>
</dbReference>
<dbReference type="PANTHER" id="PTHR43507:SF21">
    <property type="entry name" value="NAD(P)H-QUINONE OXIDOREDUCTASE CHAIN 4, CHLOROPLASTIC"/>
    <property type="match status" value="1"/>
</dbReference>
<dbReference type="PANTHER" id="PTHR43507">
    <property type="entry name" value="NADH-UBIQUINONE OXIDOREDUCTASE CHAIN 4"/>
    <property type="match status" value="1"/>
</dbReference>
<dbReference type="Pfam" id="PF00361">
    <property type="entry name" value="Proton_antipo_M"/>
    <property type="match status" value="1"/>
</dbReference>
<dbReference type="PRINTS" id="PR01437">
    <property type="entry name" value="NUOXDRDTASE4"/>
</dbReference>
<name>NU4C_ILLOL</name>
<comment type="catalytic activity">
    <reaction evidence="1">
        <text>a plastoquinone + NADH + (n+1) H(+)(in) = a plastoquinol + NAD(+) + n H(+)(out)</text>
        <dbReference type="Rhea" id="RHEA:42608"/>
        <dbReference type="Rhea" id="RHEA-COMP:9561"/>
        <dbReference type="Rhea" id="RHEA-COMP:9562"/>
        <dbReference type="ChEBI" id="CHEBI:15378"/>
        <dbReference type="ChEBI" id="CHEBI:17757"/>
        <dbReference type="ChEBI" id="CHEBI:57540"/>
        <dbReference type="ChEBI" id="CHEBI:57945"/>
        <dbReference type="ChEBI" id="CHEBI:62192"/>
    </reaction>
</comment>
<comment type="catalytic activity">
    <reaction evidence="1">
        <text>a plastoquinone + NADPH + (n+1) H(+)(in) = a plastoquinol + NADP(+) + n H(+)(out)</text>
        <dbReference type="Rhea" id="RHEA:42612"/>
        <dbReference type="Rhea" id="RHEA-COMP:9561"/>
        <dbReference type="Rhea" id="RHEA-COMP:9562"/>
        <dbReference type="ChEBI" id="CHEBI:15378"/>
        <dbReference type="ChEBI" id="CHEBI:17757"/>
        <dbReference type="ChEBI" id="CHEBI:57783"/>
        <dbReference type="ChEBI" id="CHEBI:58349"/>
        <dbReference type="ChEBI" id="CHEBI:62192"/>
    </reaction>
</comment>
<comment type="subcellular location">
    <subcellularLocation>
        <location evidence="1">Plastid</location>
        <location evidence="1">Chloroplast thylakoid membrane</location>
        <topology evidence="1">Multi-pass membrane protein</topology>
    </subcellularLocation>
</comment>
<comment type="similarity">
    <text evidence="1">Belongs to the complex I subunit 4 family.</text>
</comment>
<geneLocation type="chloroplast"/>
<reference key="1">
    <citation type="journal article" date="2007" name="Mol. Phylogenet. Evol.">
        <title>Phylogenetic and evolutionary implications of complete chloroplast genome sequences of four early-diverging angiosperms: Buxus (Buxaceae), Chloranthus (Chloranthaceae), Dioscorea (Dioscoreaceae), and Illicium (Schisandraceae).</title>
        <authorList>
            <person name="Hansen D.R."/>
            <person name="Dastidar S.G."/>
            <person name="Cai Z."/>
            <person name="Penaflor C."/>
            <person name="Kuehl J.V."/>
            <person name="Boore J.L."/>
            <person name="Jansen R.K."/>
        </authorList>
    </citation>
    <scope>NUCLEOTIDE SEQUENCE [LARGE SCALE GENOMIC DNA]</scope>
</reference>
<keyword id="KW-0150">Chloroplast</keyword>
<keyword id="KW-0472">Membrane</keyword>
<keyword id="KW-0520">NAD</keyword>
<keyword id="KW-0521">NADP</keyword>
<keyword id="KW-0934">Plastid</keyword>
<keyword id="KW-0618">Plastoquinone</keyword>
<keyword id="KW-0874">Quinone</keyword>
<keyword id="KW-0793">Thylakoid</keyword>
<keyword id="KW-1278">Translocase</keyword>
<keyword id="KW-0812">Transmembrane</keyword>
<keyword id="KW-1133">Transmembrane helix</keyword>
<sequence length="500" mass="55923">MSHFPWLTIIVVLPISAGSSIGFLPYRGNKAVRWYTICICILELLLTTYAFCYHFQLDDPLIQLEEDYNWINLFDFNWRLGIDGLSMGPVLLTGFITTLATLAAWPVTRDSRLFHFLMLAMYSGQIGSFSSRDLLLFFMMWELELIPIYLLLSLWGGKKRLYSATKFILYTAGGSIFLLMGVSGMGLYSSNEPTLNFETLTNQSYPVALEIIFYIGFFIAYAAKSPIIPLHTWLPDTHGEAHYSTCMLLAGILLKMGAYGLVRINMELLPHAHSIFSPWLMIIGAIQIIYAASTSPGQRNLKKRIAYSSVSHMGFITIGIGSITDTGLNGSILQIISHGFIGAALFFLAGTTYDRIRLVYLDEMGGIAILMPKMFMMFSSFSMASLALPGMSGFVAESVVFLGIITSPKYFLMPKILITFVMAIGMILTPIYSLSMSRQIFYGYKLFNVSNSYFVDSGPRELFILICILLPVIGIGIYPDFVLSLSVDKVEAILSSYFHR</sequence>
<feature type="chain" id="PRO_0000343286" description="NAD(P)H-quinone oxidoreductase chain 4, chloroplastic">
    <location>
        <begin position="1"/>
        <end position="500"/>
    </location>
</feature>
<feature type="transmembrane region" description="Helical" evidence="1">
    <location>
        <begin position="4"/>
        <end position="24"/>
    </location>
</feature>
<feature type="transmembrane region" description="Helical" evidence="1">
    <location>
        <begin position="37"/>
        <end position="57"/>
    </location>
</feature>
<feature type="transmembrane region" description="Helical" evidence="1">
    <location>
        <begin position="87"/>
        <end position="107"/>
    </location>
</feature>
<feature type="transmembrane region" description="Helical" evidence="1">
    <location>
        <begin position="113"/>
        <end position="130"/>
    </location>
</feature>
<feature type="transmembrane region" description="Helical" evidence="1">
    <location>
        <begin position="134"/>
        <end position="154"/>
    </location>
</feature>
<feature type="transmembrane region" description="Helical" evidence="1">
    <location>
        <begin position="167"/>
        <end position="187"/>
    </location>
</feature>
<feature type="transmembrane region" description="Helical" evidence="1">
    <location>
        <begin position="208"/>
        <end position="228"/>
    </location>
</feature>
<feature type="transmembrane region" description="Helical" evidence="1">
    <location>
        <begin position="242"/>
        <end position="262"/>
    </location>
</feature>
<feature type="transmembrane region" description="Helical" evidence="1">
    <location>
        <begin position="272"/>
        <end position="292"/>
    </location>
</feature>
<feature type="transmembrane region" description="Helical" evidence="1">
    <location>
        <begin position="305"/>
        <end position="325"/>
    </location>
</feature>
<feature type="transmembrane region" description="Helical" evidence="1">
    <location>
        <begin position="330"/>
        <end position="350"/>
    </location>
</feature>
<feature type="transmembrane region" description="Helical" evidence="1">
    <location>
        <begin position="386"/>
        <end position="406"/>
    </location>
</feature>
<feature type="transmembrane region" description="Helical" evidence="1">
    <location>
        <begin position="416"/>
        <end position="436"/>
    </location>
</feature>
<feature type="transmembrane region" description="Helical" evidence="1">
    <location>
        <begin position="462"/>
        <end position="482"/>
    </location>
</feature>
<organism>
    <name type="scientific">Illicium oligandrum</name>
    <name type="common">Star anise</name>
    <dbReference type="NCBI Taxonomy" id="145286"/>
    <lineage>
        <taxon>Eukaryota</taxon>
        <taxon>Viridiplantae</taxon>
        <taxon>Streptophyta</taxon>
        <taxon>Embryophyta</taxon>
        <taxon>Tracheophyta</taxon>
        <taxon>Spermatophyta</taxon>
        <taxon>Magnoliopsida</taxon>
        <taxon>Austrobaileyales</taxon>
        <taxon>Schisandraceae</taxon>
        <taxon>Illicium</taxon>
    </lineage>
</organism>
<proteinExistence type="inferred from homology"/>
<protein>
    <recommendedName>
        <fullName evidence="1">NAD(P)H-quinone oxidoreductase chain 4, chloroplastic</fullName>
        <ecNumber evidence="1">7.1.1.-</ecNumber>
    </recommendedName>
    <alternativeName>
        <fullName evidence="1">NAD(P)H dehydrogenase, chain 4</fullName>
    </alternativeName>
    <alternativeName>
        <fullName evidence="1">NADH-plastoquinone oxidoreductase chain 4</fullName>
    </alternativeName>
</protein>